<keyword id="KW-1185">Reference proteome</keyword>
<keyword id="KW-0687">Ribonucleoprotein</keyword>
<keyword id="KW-0689">Ribosomal protein</keyword>
<keyword id="KW-0694">RNA-binding</keyword>
<keyword id="KW-0699">rRNA-binding</keyword>
<gene>
    <name evidence="1" type="primary">rplV</name>
    <name type="ordered locus">NE0406</name>
</gene>
<accession>Q82X83</accession>
<organism>
    <name type="scientific">Nitrosomonas europaea (strain ATCC 19718 / CIP 103999 / KCTC 2705 / NBRC 14298)</name>
    <dbReference type="NCBI Taxonomy" id="228410"/>
    <lineage>
        <taxon>Bacteria</taxon>
        <taxon>Pseudomonadati</taxon>
        <taxon>Pseudomonadota</taxon>
        <taxon>Betaproteobacteria</taxon>
        <taxon>Nitrosomonadales</taxon>
        <taxon>Nitrosomonadaceae</taxon>
        <taxon>Nitrosomonas</taxon>
    </lineage>
</organism>
<comment type="function">
    <text evidence="1">This protein binds specifically to 23S rRNA; its binding is stimulated by other ribosomal proteins, e.g. L4, L17, and L20. It is important during the early stages of 50S assembly. It makes multiple contacts with different domains of the 23S rRNA in the assembled 50S subunit and ribosome (By similarity).</text>
</comment>
<comment type="function">
    <text evidence="1">The globular domain of the protein is located near the polypeptide exit tunnel on the outside of the subunit, while an extended beta-hairpin is found that lines the wall of the exit tunnel in the center of the 70S ribosome.</text>
</comment>
<comment type="subunit">
    <text evidence="1">Part of the 50S ribosomal subunit.</text>
</comment>
<comment type="similarity">
    <text evidence="1">Belongs to the universal ribosomal protein uL22 family.</text>
</comment>
<dbReference type="EMBL" id="AL954747">
    <property type="protein sequence ID" value="CAD84317.1"/>
    <property type="molecule type" value="Genomic_DNA"/>
</dbReference>
<dbReference type="RefSeq" id="WP_011111041.1">
    <property type="nucleotide sequence ID" value="NC_004757.1"/>
</dbReference>
<dbReference type="SMR" id="Q82X83"/>
<dbReference type="STRING" id="228410.NE0406"/>
<dbReference type="GeneID" id="87103615"/>
<dbReference type="KEGG" id="neu:NE0406"/>
<dbReference type="eggNOG" id="COG0091">
    <property type="taxonomic scope" value="Bacteria"/>
</dbReference>
<dbReference type="HOGENOM" id="CLU_083987_3_3_4"/>
<dbReference type="OrthoDB" id="9805969at2"/>
<dbReference type="PhylomeDB" id="Q82X83"/>
<dbReference type="Proteomes" id="UP000001416">
    <property type="component" value="Chromosome"/>
</dbReference>
<dbReference type="GO" id="GO:0022625">
    <property type="term" value="C:cytosolic large ribosomal subunit"/>
    <property type="evidence" value="ECO:0007669"/>
    <property type="project" value="TreeGrafter"/>
</dbReference>
<dbReference type="GO" id="GO:0019843">
    <property type="term" value="F:rRNA binding"/>
    <property type="evidence" value="ECO:0007669"/>
    <property type="project" value="UniProtKB-UniRule"/>
</dbReference>
<dbReference type="GO" id="GO:0003735">
    <property type="term" value="F:structural constituent of ribosome"/>
    <property type="evidence" value="ECO:0007669"/>
    <property type="project" value="InterPro"/>
</dbReference>
<dbReference type="GO" id="GO:0006412">
    <property type="term" value="P:translation"/>
    <property type="evidence" value="ECO:0007669"/>
    <property type="project" value="UniProtKB-UniRule"/>
</dbReference>
<dbReference type="CDD" id="cd00336">
    <property type="entry name" value="Ribosomal_L22"/>
    <property type="match status" value="1"/>
</dbReference>
<dbReference type="Gene3D" id="3.90.470.10">
    <property type="entry name" value="Ribosomal protein L22/L17"/>
    <property type="match status" value="1"/>
</dbReference>
<dbReference type="HAMAP" id="MF_01331_B">
    <property type="entry name" value="Ribosomal_uL22_B"/>
    <property type="match status" value="1"/>
</dbReference>
<dbReference type="InterPro" id="IPR001063">
    <property type="entry name" value="Ribosomal_uL22"/>
</dbReference>
<dbReference type="InterPro" id="IPR005727">
    <property type="entry name" value="Ribosomal_uL22_bac/chlpt-type"/>
</dbReference>
<dbReference type="InterPro" id="IPR047867">
    <property type="entry name" value="Ribosomal_uL22_bac/org-type"/>
</dbReference>
<dbReference type="InterPro" id="IPR018260">
    <property type="entry name" value="Ribosomal_uL22_CS"/>
</dbReference>
<dbReference type="InterPro" id="IPR036394">
    <property type="entry name" value="Ribosomal_uL22_sf"/>
</dbReference>
<dbReference type="NCBIfam" id="TIGR01044">
    <property type="entry name" value="rplV_bact"/>
    <property type="match status" value="1"/>
</dbReference>
<dbReference type="PANTHER" id="PTHR13501">
    <property type="entry name" value="CHLOROPLAST 50S RIBOSOMAL PROTEIN L22-RELATED"/>
    <property type="match status" value="1"/>
</dbReference>
<dbReference type="PANTHER" id="PTHR13501:SF8">
    <property type="entry name" value="LARGE RIBOSOMAL SUBUNIT PROTEIN UL22M"/>
    <property type="match status" value="1"/>
</dbReference>
<dbReference type="Pfam" id="PF00237">
    <property type="entry name" value="Ribosomal_L22"/>
    <property type="match status" value="1"/>
</dbReference>
<dbReference type="SUPFAM" id="SSF54843">
    <property type="entry name" value="Ribosomal protein L22"/>
    <property type="match status" value="1"/>
</dbReference>
<dbReference type="PROSITE" id="PS00464">
    <property type="entry name" value="RIBOSOMAL_L22"/>
    <property type="match status" value="1"/>
</dbReference>
<name>RL22_NITEU</name>
<reference key="1">
    <citation type="journal article" date="2003" name="J. Bacteriol.">
        <title>Complete genome sequence of the ammonia-oxidizing bacterium and obligate chemolithoautotroph Nitrosomonas europaea.</title>
        <authorList>
            <person name="Chain P."/>
            <person name="Lamerdin J.E."/>
            <person name="Larimer F.W."/>
            <person name="Regala W."/>
            <person name="Lao V."/>
            <person name="Land M.L."/>
            <person name="Hauser L."/>
            <person name="Hooper A.B."/>
            <person name="Klotz M.G."/>
            <person name="Norton J."/>
            <person name="Sayavedra-Soto L.A."/>
            <person name="Arciero D.M."/>
            <person name="Hommes N.G."/>
            <person name="Whittaker M.M."/>
            <person name="Arp D.J."/>
        </authorList>
    </citation>
    <scope>NUCLEOTIDE SEQUENCE [LARGE SCALE GENOMIC DNA]</scope>
    <source>
        <strain>ATCC 19718 / CIP 103999 / KCTC 2705 / NBRC 14298</strain>
    </source>
</reference>
<proteinExistence type="inferred from homology"/>
<protein>
    <recommendedName>
        <fullName evidence="1">Large ribosomal subunit protein uL22</fullName>
    </recommendedName>
    <alternativeName>
        <fullName evidence="2">50S ribosomal protein L22</fullName>
    </alternativeName>
</protein>
<sequence>METSAVLRSVRLSAQKGRLVADQIRGLQVERAIRLLTFSPKKGASIILKLLESAVANAEHNEGADIDELKISQIFIGQGATLKRVSPRAKGRGNRISKPTCNIFLTVSNK</sequence>
<feature type="chain" id="PRO_0000125190" description="Large ribosomal subunit protein uL22">
    <location>
        <begin position="1"/>
        <end position="110"/>
    </location>
</feature>
<evidence type="ECO:0000255" key="1">
    <source>
        <dbReference type="HAMAP-Rule" id="MF_01331"/>
    </source>
</evidence>
<evidence type="ECO:0000305" key="2"/>